<organism>
    <name type="scientific">Francisella tularensis subsp. holarctica (strain OSU18)</name>
    <dbReference type="NCBI Taxonomy" id="393011"/>
    <lineage>
        <taxon>Bacteria</taxon>
        <taxon>Pseudomonadati</taxon>
        <taxon>Pseudomonadota</taxon>
        <taxon>Gammaproteobacteria</taxon>
        <taxon>Thiotrichales</taxon>
        <taxon>Francisellaceae</taxon>
        <taxon>Francisella</taxon>
    </lineage>
</organism>
<name>CYOE_FRATO</name>
<evidence type="ECO:0000255" key="1">
    <source>
        <dbReference type="HAMAP-Rule" id="MF_00154"/>
    </source>
</evidence>
<feature type="chain" id="PRO_0000326897" description="Protoheme IX farnesyltransferase">
    <location>
        <begin position="1"/>
        <end position="282"/>
    </location>
</feature>
<feature type="transmembrane region" description="Helical" evidence="1">
    <location>
        <begin position="9"/>
        <end position="29"/>
    </location>
</feature>
<feature type="transmembrane region" description="Helical" evidence="1">
    <location>
        <begin position="39"/>
        <end position="59"/>
    </location>
</feature>
<feature type="transmembrane region" description="Helical" evidence="1">
    <location>
        <begin position="79"/>
        <end position="99"/>
    </location>
</feature>
<feature type="transmembrane region" description="Helical" evidence="1">
    <location>
        <begin position="102"/>
        <end position="122"/>
    </location>
</feature>
<feature type="transmembrane region" description="Helical" evidence="1">
    <location>
        <begin position="139"/>
        <end position="159"/>
    </location>
</feature>
<feature type="transmembrane region" description="Helical" evidence="1">
    <location>
        <begin position="165"/>
        <end position="185"/>
    </location>
</feature>
<feature type="transmembrane region" description="Helical" evidence="1">
    <location>
        <begin position="210"/>
        <end position="230"/>
    </location>
</feature>
<feature type="transmembrane region" description="Helical" evidence="1">
    <location>
        <begin position="231"/>
        <end position="251"/>
    </location>
</feature>
<feature type="transmembrane region" description="Helical" evidence="1">
    <location>
        <begin position="261"/>
        <end position="281"/>
    </location>
</feature>
<proteinExistence type="inferred from homology"/>
<reference key="1">
    <citation type="journal article" date="2006" name="J. Bacteriol.">
        <title>Chromosome rearrangement and diversification of Francisella tularensis revealed by the type B (OSU18) genome sequence.</title>
        <authorList>
            <person name="Petrosino J.F."/>
            <person name="Xiang Q."/>
            <person name="Karpathy S.E."/>
            <person name="Jiang H."/>
            <person name="Yerrapragada S."/>
            <person name="Liu Y."/>
            <person name="Gioia J."/>
            <person name="Hemphill L."/>
            <person name="Gonzalez A."/>
            <person name="Raghavan T.M."/>
            <person name="Uzman A."/>
            <person name="Fox G.E."/>
            <person name="Highlander S."/>
            <person name="Reichard M."/>
            <person name="Morton R.J."/>
            <person name="Clinkenbeard K.D."/>
            <person name="Weinstock G.M."/>
        </authorList>
    </citation>
    <scope>NUCLEOTIDE SEQUENCE [LARGE SCALE GENOMIC DNA]</scope>
    <source>
        <strain>OSU18</strain>
    </source>
</reference>
<accession>Q0BNW5</accession>
<keyword id="KW-0997">Cell inner membrane</keyword>
<keyword id="KW-1003">Cell membrane</keyword>
<keyword id="KW-0350">Heme biosynthesis</keyword>
<keyword id="KW-0472">Membrane</keyword>
<keyword id="KW-0808">Transferase</keyword>
<keyword id="KW-0812">Transmembrane</keyword>
<keyword id="KW-1133">Transmembrane helix</keyword>
<gene>
    <name evidence="1" type="primary">cyoE</name>
    <name type="ordered locus">FTH_0190</name>
</gene>
<protein>
    <recommendedName>
        <fullName evidence="1">Protoheme IX farnesyltransferase</fullName>
        <ecNumber evidence="1">2.5.1.141</ecNumber>
    </recommendedName>
    <alternativeName>
        <fullName evidence="1">Heme B farnesyltransferase</fullName>
    </alternativeName>
    <alternativeName>
        <fullName evidence="1">Heme O synthase</fullName>
    </alternativeName>
</protein>
<sequence length="282" mass="31543">MYFKRYLQLAKPGIIFGNLITLTGGFLLATHREIGFEYLPLFVYVMIGVALMIAAGCVFNNIYDKDIDSSMTRTQNRPLVTGDISVIQATIYGTILLILSCLVLYYLVNLLTLWIIIIGFIVYVGIYTVSKRLTIHATVLGGISGAIPPVAGYTAVVNILDYNALALFLILFFWQIPHSYAIAMLYIDDYKKVKLPMLPIVKGIAYTKKIMLFYLALFVVSCALPAVLGSADLFSFIVCMLVALFWMYKSIQSYRTDTDRVFAKTVFKFSIIVITAICLTMG</sequence>
<dbReference type="EC" id="2.5.1.141" evidence="1"/>
<dbReference type="EMBL" id="CP000437">
    <property type="protein sequence ID" value="ABI82219.1"/>
    <property type="molecule type" value="Genomic_DNA"/>
</dbReference>
<dbReference type="RefSeq" id="WP_003027258.1">
    <property type="nucleotide sequence ID" value="NC_017463.1"/>
</dbReference>
<dbReference type="SMR" id="Q0BNW5"/>
<dbReference type="KEGG" id="fth:FTH_0190"/>
<dbReference type="UniPathway" id="UPA00834">
    <property type="reaction ID" value="UER00712"/>
</dbReference>
<dbReference type="GO" id="GO:0005886">
    <property type="term" value="C:plasma membrane"/>
    <property type="evidence" value="ECO:0007669"/>
    <property type="project" value="UniProtKB-SubCell"/>
</dbReference>
<dbReference type="GO" id="GO:0008495">
    <property type="term" value="F:protoheme IX farnesyltransferase activity"/>
    <property type="evidence" value="ECO:0007669"/>
    <property type="project" value="UniProtKB-UniRule"/>
</dbReference>
<dbReference type="GO" id="GO:0048034">
    <property type="term" value="P:heme O biosynthetic process"/>
    <property type="evidence" value="ECO:0007669"/>
    <property type="project" value="UniProtKB-UniRule"/>
</dbReference>
<dbReference type="CDD" id="cd13957">
    <property type="entry name" value="PT_UbiA_Cox10"/>
    <property type="match status" value="1"/>
</dbReference>
<dbReference type="Gene3D" id="1.10.357.140">
    <property type="entry name" value="UbiA prenyltransferase"/>
    <property type="match status" value="1"/>
</dbReference>
<dbReference type="HAMAP" id="MF_00154">
    <property type="entry name" value="CyoE_CtaB"/>
    <property type="match status" value="1"/>
</dbReference>
<dbReference type="InterPro" id="IPR006369">
    <property type="entry name" value="Protohaem_IX_farnesylTrfase"/>
</dbReference>
<dbReference type="InterPro" id="IPR000537">
    <property type="entry name" value="UbiA_prenyltransferase"/>
</dbReference>
<dbReference type="InterPro" id="IPR030470">
    <property type="entry name" value="UbiA_prenylTrfase_CS"/>
</dbReference>
<dbReference type="InterPro" id="IPR044878">
    <property type="entry name" value="UbiA_sf"/>
</dbReference>
<dbReference type="NCBIfam" id="TIGR01473">
    <property type="entry name" value="cyoE_ctaB"/>
    <property type="match status" value="1"/>
</dbReference>
<dbReference type="NCBIfam" id="NF003348">
    <property type="entry name" value="PRK04375.1-1"/>
    <property type="match status" value="1"/>
</dbReference>
<dbReference type="PANTHER" id="PTHR43448">
    <property type="entry name" value="PROTOHEME IX FARNESYLTRANSFERASE, MITOCHONDRIAL"/>
    <property type="match status" value="1"/>
</dbReference>
<dbReference type="PANTHER" id="PTHR43448:SF2">
    <property type="entry name" value="PROTOHEME IX FARNESYLTRANSFERASE, MITOCHONDRIAL"/>
    <property type="match status" value="1"/>
</dbReference>
<dbReference type="Pfam" id="PF01040">
    <property type="entry name" value="UbiA"/>
    <property type="match status" value="1"/>
</dbReference>
<dbReference type="PROSITE" id="PS00943">
    <property type="entry name" value="UBIA"/>
    <property type="match status" value="1"/>
</dbReference>
<comment type="function">
    <text evidence="1">Converts heme B (protoheme IX) to heme O by substitution of the vinyl group on carbon 2 of heme B porphyrin ring with a hydroxyethyl farnesyl side group.</text>
</comment>
<comment type="catalytic activity">
    <reaction evidence="1">
        <text>heme b + (2E,6E)-farnesyl diphosphate + H2O = Fe(II)-heme o + diphosphate</text>
        <dbReference type="Rhea" id="RHEA:28070"/>
        <dbReference type="ChEBI" id="CHEBI:15377"/>
        <dbReference type="ChEBI" id="CHEBI:33019"/>
        <dbReference type="ChEBI" id="CHEBI:60344"/>
        <dbReference type="ChEBI" id="CHEBI:60530"/>
        <dbReference type="ChEBI" id="CHEBI:175763"/>
        <dbReference type="EC" id="2.5.1.141"/>
    </reaction>
</comment>
<comment type="pathway">
    <text evidence="1">Porphyrin-containing compound metabolism; heme O biosynthesis; heme O from protoheme: step 1/1.</text>
</comment>
<comment type="subcellular location">
    <subcellularLocation>
        <location evidence="1">Cell inner membrane</location>
        <topology evidence="1">Multi-pass membrane protein</topology>
    </subcellularLocation>
</comment>
<comment type="miscellaneous">
    <text evidence="1">Carbon 2 of the heme B porphyrin ring is defined according to the Fischer nomenclature.</text>
</comment>
<comment type="similarity">
    <text evidence="1">Belongs to the UbiA prenyltransferase family. Protoheme IX farnesyltransferase subfamily.</text>
</comment>